<feature type="chain" id="PRO_0000319880" description="3-oxoacyl-[acyl-carrier-protein] reductase">
    <location>
        <begin position="1"/>
        <end position="236"/>
    </location>
</feature>
<feature type="active site" description="Proton acceptor" evidence="3">
    <location>
        <position position="147"/>
    </location>
</feature>
<feature type="binding site" evidence="1">
    <location>
        <begin position="11"/>
        <end position="14"/>
    </location>
    <ligand>
        <name>NADP(+)</name>
        <dbReference type="ChEBI" id="CHEBI:58349"/>
    </ligand>
</feature>
<feature type="binding site" evidence="1">
    <location>
        <begin position="34"/>
        <end position="35"/>
    </location>
    <ligand>
        <name>NADP(+)</name>
        <dbReference type="ChEBI" id="CHEBI:58349"/>
    </ligand>
</feature>
<feature type="binding site" evidence="1">
    <location>
        <begin position="83"/>
        <end position="85"/>
    </location>
    <ligand>
        <name>NADP(+)</name>
        <dbReference type="ChEBI" id="CHEBI:58349"/>
    </ligand>
</feature>
<feature type="binding site" evidence="1">
    <location>
        <position position="134"/>
    </location>
    <ligand>
        <name>substrate</name>
    </ligand>
</feature>
<feature type="binding site" evidence="1">
    <location>
        <position position="147"/>
    </location>
    <ligand>
        <name>NADP(+)</name>
        <dbReference type="ChEBI" id="CHEBI:58349"/>
    </ligand>
</feature>
<feature type="binding site" evidence="1">
    <location>
        <position position="151"/>
    </location>
    <ligand>
        <name>NADP(+)</name>
        <dbReference type="ChEBI" id="CHEBI:58349"/>
    </ligand>
</feature>
<feature type="binding site" evidence="1">
    <location>
        <begin position="180"/>
        <end position="182"/>
    </location>
    <ligand>
        <name>NADP(+)</name>
        <dbReference type="ChEBI" id="CHEBI:58349"/>
    </ligand>
</feature>
<feature type="site" description="Important for interaction with acyl carrier protein (ACP)" evidence="1">
    <location>
        <position position="168"/>
    </location>
</feature>
<feature type="modified residue" description="N-acetylmethionine" evidence="1">
    <location>
        <position position="1"/>
    </location>
</feature>
<feature type="modified residue" description="N6-acetyllysine" evidence="2">
    <location>
        <position position="40"/>
    </location>
</feature>
<feature type="modified residue" description="N6-acetyllysine" evidence="2">
    <location>
        <position position="96"/>
    </location>
</feature>
<feature type="modified residue" description="N6-acetyllysine" evidence="2">
    <location>
        <position position="194"/>
    </location>
</feature>
<reference key="1">
    <citation type="submission" date="2003-05" db="EMBL/GenBank/DDBJ databases">
        <authorList>
            <person name="Deng Q."/>
            <person name="Guo J.H."/>
        </authorList>
    </citation>
    <scope>NUCLEOTIDE SEQUENCE [LARGE SCALE MRNA]</scope>
    <source>
        <strain>Sprague-Dawley</strain>
        <tissue>Brain</tissue>
    </source>
</reference>
<reference key="2">
    <citation type="journal article" date="2004" name="Genome Res.">
        <title>The status, quality, and expansion of the NIH full-length cDNA project: the Mammalian Gene Collection (MGC).</title>
        <authorList>
            <consortium name="The MGC Project Team"/>
        </authorList>
    </citation>
    <scope>NUCLEOTIDE SEQUENCE [LARGE SCALE MRNA]</scope>
    <source>
        <tissue>Ovary</tissue>
    </source>
</reference>
<dbReference type="EC" id="1.1.1.100" evidence="1"/>
<dbReference type="EC" id="1.6.5.10" evidence="1"/>
<dbReference type="EMBL" id="AY305858">
    <property type="protein sequence ID" value="AAP70488.1"/>
    <property type="molecule type" value="mRNA"/>
</dbReference>
<dbReference type="EMBL" id="BC086378">
    <property type="protein sequence ID" value="AAH86378.1"/>
    <property type="molecule type" value="mRNA"/>
</dbReference>
<dbReference type="RefSeq" id="NP_872613.1">
    <property type="nucleotide sequence ID" value="NM_182672.2"/>
</dbReference>
<dbReference type="SMR" id="Q7TS56"/>
<dbReference type="FunCoup" id="Q7TS56">
    <property type="interactions" value="1851"/>
</dbReference>
<dbReference type="STRING" id="10116.ENSRNOP00000038351"/>
<dbReference type="iPTMnet" id="Q7TS56"/>
<dbReference type="PhosphoSitePlus" id="Q7TS56"/>
<dbReference type="PaxDb" id="10116-ENSRNOP00000038351"/>
<dbReference type="Ensembl" id="ENSRNOT00000032199.7">
    <property type="protein sequence ID" value="ENSRNOP00000038351.6"/>
    <property type="gene ID" value="ENSRNOG00000024411.7"/>
</dbReference>
<dbReference type="GeneID" id="359725"/>
<dbReference type="KEGG" id="rno:359725"/>
<dbReference type="UCSC" id="RGD:727826">
    <property type="organism name" value="rat"/>
</dbReference>
<dbReference type="AGR" id="RGD:727826"/>
<dbReference type="CTD" id="84869"/>
<dbReference type="RGD" id="727826">
    <property type="gene designation" value="Cbr4"/>
</dbReference>
<dbReference type="eggNOG" id="KOG1200">
    <property type="taxonomic scope" value="Eukaryota"/>
</dbReference>
<dbReference type="GeneTree" id="ENSGT00940000157620"/>
<dbReference type="HOGENOM" id="CLU_010194_1_3_1"/>
<dbReference type="InParanoid" id="Q7TS56"/>
<dbReference type="OMA" id="CQKHMVD"/>
<dbReference type="OrthoDB" id="43105at9989"/>
<dbReference type="PhylomeDB" id="Q7TS56"/>
<dbReference type="Reactome" id="R-RNO-75105">
    <property type="pathway name" value="Fatty acyl-CoA biosynthesis"/>
</dbReference>
<dbReference type="UniPathway" id="UPA00094"/>
<dbReference type="PRO" id="PR:Q7TS56"/>
<dbReference type="Proteomes" id="UP000002494">
    <property type="component" value="Chromosome 16"/>
</dbReference>
<dbReference type="Bgee" id="ENSRNOG00000024411">
    <property type="expression patterns" value="Expressed in liver and 20 other cell types or tissues"/>
</dbReference>
<dbReference type="GO" id="GO:0005759">
    <property type="term" value="C:mitochondrial matrix"/>
    <property type="evidence" value="ECO:0000250"/>
    <property type="project" value="UniProtKB"/>
</dbReference>
<dbReference type="GO" id="GO:1990204">
    <property type="term" value="C:oxidoreductase complex"/>
    <property type="evidence" value="ECO:0000250"/>
    <property type="project" value="UniProtKB"/>
</dbReference>
<dbReference type="GO" id="GO:0004316">
    <property type="term" value="F:3-oxoacyl-[acyl-carrier-protein] reductase (NADPH) activity"/>
    <property type="evidence" value="ECO:0000250"/>
    <property type="project" value="UniProtKB"/>
</dbReference>
<dbReference type="GO" id="GO:0003955">
    <property type="term" value="F:NAD(P)H dehydrogenase (quinone) activity"/>
    <property type="evidence" value="ECO:0000266"/>
    <property type="project" value="RGD"/>
</dbReference>
<dbReference type="GO" id="GO:0070402">
    <property type="term" value="F:NADPH binding"/>
    <property type="evidence" value="ECO:0000250"/>
    <property type="project" value="UniProtKB"/>
</dbReference>
<dbReference type="GO" id="GO:0008753">
    <property type="term" value="F:NADPH dehydrogenase (quinone) activity"/>
    <property type="evidence" value="ECO:0000250"/>
    <property type="project" value="UniProtKB"/>
</dbReference>
<dbReference type="GO" id="GO:0016616">
    <property type="term" value="F:oxidoreductase activity, acting on the CH-OH group of donors, NAD or NADP as acceptor"/>
    <property type="evidence" value="ECO:0000318"/>
    <property type="project" value="GO_Central"/>
</dbReference>
<dbReference type="GO" id="GO:0048038">
    <property type="term" value="F:quinone binding"/>
    <property type="evidence" value="ECO:0000250"/>
    <property type="project" value="UniProtKB"/>
</dbReference>
<dbReference type="GO" id="GO:0044597">
    <property type="term" value="P:daunorubicin metabolic process"/>
    <property type="evidence" value="ECO:0000266"/>
    <property type="project" value="RGD"/>
</dbReference>
<dbReference type="GO" id="GO:0044598">
    <property type="term" value="P:doxorubicin metabolic process"/>
    <property type="evidence" value="ECO:0000266"/>
    <property type="project" value="RGD"/>
</dbReference>
<dbReference type="GO" id="GO:0006633">
    <property type="term" value="P:fatty acid biosynthetic process"/>
    <property type="evidence" value="ECO:0000250"/>
    <property type="project" value="UniProtKB"/>
</dbReference>
<dbReference type="GO" id="GO:0051290">
    <property type="term" value="P:protein heterotetramerization"/>
    <property type="evidence" value="ECO:0000250"/>
    <property type="project" value="UniProtKB"/>
</dbReference>
<dbReference type="GO" id="GO:0051289">
    <property type="term" value="P:protein homotetramerization"/>
    <property type="evidence" value="ECO:0000266"/>
    <property type="project" value="RGD"/>
</dbReference>
<dbReference type="FunFam" id="3.40.50.720:FF:000285">
    <property type="entry name" value="Carbonyl reductase family member 4"/>
    <property type="match status" value="1"/>
</dbReference>
<dbReference type="Gene3D" id="3.40.50.720">
    <property type="entry name" value="NAD(P)-binding Rossmann-like Domain"/>
    <property type="match status" value="1"/>
</dbReference>
<dbReference type="InterPro" id="IPR036291">
    <property type="entry name" value="NAD(P)-bd_dom_sf"/>
</dbReference>
<dbReference type="InterPro" id="IPR020904">
    <property type="entry name" value="Sc_DH/Rdtase_CS"/>
</dbReference>
<dbReference type="InterPro" id="IPR002347">
    <property type="entry name" value="SDR_fam"/>
</dbReference>
<dbReference type="PANTHER" id="PTHR42760:SF133">
    <property type="entry name" value="3-OXOACYL-[ACYL-CARRIER-PROTEIN] REDUCTASE"/>
    <property type="match status" value="1"/>
</dbReference>
<dbReference type="PANTHER" id="PTHR42760">
    <property type="entry name" value="SHORT-CHAIN DEHYDROGENASES/REDUCTASES FAMILY MEMBER"/>
    <property type="match status" value="1"/>
</dbReference>
<dbReference type="Pfam" id="PF13561">
    <property type="entry name" value="adh_short_C2"/>
    <property type="match status" value="1"/>
</dbReference>
<dbReference type="PRINTS" id="PR00081">
    <property type="entry name" value="GDHRDH"/>
</dbReference>
<dbReference type="PRINTS" id="PR00080">
    <property type="entry name" value="SDRFAMILY"/>
</dbReference>
<dbReference type="SMART" id="SM00822">
    <property type="entry name" value="PKS_KR"/>
    <property type="match status" value="1"/>
</dbReference>
<dbReference type="SUPFAM" id="SSF51735">
    <property type="entry name" value="NAD(P)-binding Rossmann-fold domains"/>
    <property type="match status" value="1"/>
</dbReference>
<dbReference type="PROSITE" id="PS00061">
    <property type="entry name" value="ADH_SHORT"/>
    <property type="match status" value="1"/>
</dbReference>
<name>CBR4_RAT</name>
<gene>
    <name type="primary">Cbr4</name>
</gene>
<protein>
    <recommendedName>
        <fullName>3-oxoacyl-[acyl-carrier-protein] reductase</fullName>
        <ecNumber evidence="1">1.1.1.100</ecNumber>
    </recommendedName>
    <alternativeName>
        <fullName evidence="1">3-ketoacyl-[acyl-carrier-protein] reductase beta subunit</fullName>
        <shortName evidence="1">KAR beta subunit</shortName>
    </alternativeName>
    <alternativeName>
        <fullName>Carbonyl reductase family member 4</fullName>
        <shortName>CBR4</shortName>
    </alternativeName>
    <alternativeName>
        <fullName>Quinone reductase CBR4</fullName>
        <ecNumber evidence="1">1.6.5.10</ecNumber>
    </alternativeName>
</protein>
<comment type="function">
    <text evidence="1">Component of the heterotetramer complex KAR (3-ketoacyl-[acyl carrier protein] reductase or 3-ketoacyl-[ACP] reductase) that forms part of the mitochondrial fatty acid synthase (mtFAS). Beta-subunit of the KAR heterotetramer complex, responsible for the 3-ketoacyl-ACP reductase activity of the mtFAS, reduces 3-oxoacyl-[ACP] to (3R)-hydroxyacyl-[ACP] in a NADPH-dependent manner with no chain length preference, thereby participating in mitochondrial fatty acid biosynthesis. The homotetramer has NADPH-dependent quinone reductase activity (in vitro), hence could play a role in protection against cytotoxicity of exogenous quinones. As a heterotetramer, it can also reduce 9,10-phenanthrenequinone, 1,4-benzoquinone and various other o-quinones and p-quinones (in vitro).</text>
</comment>
<comment type="catalytic activity">
    <reaction evidence="1">
        <text>a (3R)-hydroxyacyl-[ACP] + NADP(+) = a 3-oxoacyl-[ACP] + NADPH + H(+)</text>
        <dbReference type="Rhea" id="RHEA:17397"/>
        <dbReference type="Rhea" id="RHEA-COMP:9916"/>
        <dbReference type="Rhea" id="RHEA-COMP:9945"/>
        <dbReference type="ChEBI" id="CHEBI:15378"/>
        <dbReference type="ChEBI" id="CHEBI:57783"/>
        <dbReference type="ChEBI" id="CHEBI:58349"/>
        <dbReference type="ChEBI" id="CHEBI:78776"/>
        <dbReference type="ChEBI" id="CHEBI:78827"/>
        <dbReference type="EC" id="1.1.1.100"/>
    </reaction>
    <physiologicalReaction direction="right-to-left" evidence="1">
        <dbReference type="Rhea" id="RHEA:17399"/>
    </physiologicalReaction>
</comment>
<comment type="catalytic activity">
    <reaction evidence="1">
        <text>a quinone + NADPH + H(+) = a quinol + NADP(+)</text>
        <dbReference type="Rhea" id="RHEA:46164"/>
        <dbReference type="ChEBI" id="CHEBI:15378"/>
        <dbReference type="ChEBI" id="CHEBI:24646"/>
        <dbReference type="ChEBI" id="CHEBI:57783"/>
        <dbReference type="ChEBI" id="CHEBI:58349"/>
        <dbReference type="ChEBI" id="CHEBI:132124"/>
        <dbReference type="EC" id="1.6.5.10"/>
    </reaction>
    <physiologicalReaction direction="left-to-right" evidence="1">
        <dbReference type="Rhea" id="RHEA:46165"/>
    </physiologicalReaction>
</comment>
<comment type="pathway">
    <text evidence="1">Lipid metabolism; fatty acid biosynthesis.</text>
</comment>
<comment type="subunit">
    <text evidence="1">Homotetramer (in vitro). Heterotetramer with HSD17B8; contains two molecules each of HSD17B8 and CBR4. Does not form homotetramers when HSD17B8 is coexpressed, only heterotetramers (in vitro).</text>
</comment>
<comment type="subcellular location">
    <subcellularLocation>
        <location evidence="1">Mitochondrion matrix</location>
    </subcellularLocation>
</comment>
<comment type="similarity">
    <text evidence="4">Belongs to the short-chain dehydrogenases/reductases (SDR) family.</text>
</comment>
<organism>
    <name type="scientific">Rattus norvegicus</name>
    <name type="common">Rat</name>
    <dbReference type="NCBI Taxonomy" id="10116"/>
    <lineage>
        <taxon>Eukaryota</taxon>
        <taxon>Metazoa</taxon>
        <taxon>Chordata</taxon>
        <taxon>Craniata</taxon>
        <taxon>Vertebrata</taxon>
        <taxon>Euteleostomi</taxon>
        <taxon>Mammalia</taxon>
        <taxon>Eutheria</taxon>
        <taxon>Euarchontoglires</taxon>
        <taxon>Glires</taxon>
        <taxon>Rodentia</taxon>
        <taxon>Myomorpha</taxon>
        <taxon>Muroidea</taxon>
        <taxon>Muridae</taxon>
        <taxon>Murinae</taxon>
        <taxon>Rattus</taxon>
    </lineage>
</organism>
<proteinExistence type="evidence at transcript level"/>
<keyword id="KW-0007">Acetylation</keyword>
<keyword id="KW-0275">Fatty acid biosynthesis</keyword>
<keyword id="KW-0276">Fatty acid metabolism</keyword>
<keyword id="KW-0444">Lipid biosynthesis</keyword>
<keyword id="KW-0443">Lipid metabolism</keyword>
<keyword id="KW-0496">Mitochondrion</keyword>
<keyword id="KW-0520">NAD</keyword>
<keyword id="KW-0521">NADP</keyword>
<keyword id="KW-0560">Oxidoreductase</keyword>
<keyword id="KW-1185">Reference proteome</keyword>
<sequence length="236" mass="25287">MDKVCAVFGGSRGIGKAVAQLMAQKGYRLAIVARNLEVAKATASELGGIHLAFRCNIAKEGDVHSTFEEMEKHLGPVNFLVNAAGINRDSLLVRTKTEDMLSQLHTNLLGTMLTCRAAMRTMIQQGGSIVNVGSIIGLKGNVGQAAYSATKGGLIGFSRSLAKEVARKKIRVNVVAPGFIHTDMTKHLKEEHFKKNIPLGRFGEALEVAHAVVFLLESPYITGHVLIVDGGLQLTA</sequence>
<evidence type="ECO:0000250" key="1">
    <source>
        <dbReference type="UniProtKB" id="Q8N4T8"/>
    </source>
</evidence>
<evidence type="ECO:0000250" key="2">
    <source>
        <dbReference type="UniProtKB" id="Q91VT4"/>
    </source>
</evidence>
<evidence type="ECO:0000255" key="3">
    <source>
        <dbReference type="PROSITE-ProRule" id="PRU10001"/>
    </source>
</evidence>
<evidence type="ECO:0000305" key="4"/>
<accession>Q7TS56</accession>